<name>SYCE2_HUMAN</name>
<keyword id="KW-0002">3D-structure</keyword>
<keyword id="KW-0131">Cell cycle</keyword>
<keyword id="KW-0132">Cell division</keyword>
<keyword id="KW-0158">Chromosome</keyword>
<keyword id="KW-0175">Coiled coil</keyword>
<keyword id="KW-0469">Meiosis</keyword>
<keyword id="KW-0539">Nucleus</keyword>
<keyword id="KW-1267">Proteomics identification</keyword>
<keyword id="KW-1185">Reference proteome</keyword>
<accession>Q6PIF2</accession>
<accession>B4DYD3</accession>
<reference key="1">
    <citation type="journal article" date="2004" name="Nat. Genet.">
        <title>Complete sequencing and characterization of 21,243 full-length human cDNAs.</title>
        <authorList>
            <person name="Ota T."/>
            <person name="Suzuki Y."/>
            <person name="Nishikawa T."/>
            <person name="Otsuki T."/>
            <person name="Sugiyama T."/>
            <person name="Irie R."/>
            <person name="Wakamatsu A."/>
            <person name="Hayashi K."/>
            <person name="Sato H."/>
            <person name="Nagai K."/>
            <person name="Kimura K."/>
            <person name="Makita H."/>
            <person name="Sekine M."/>
            <person name="Obayashi M."/>
            <person name="Nishi T."/>
            <person name="Shibahara T."/>
            <person name="Tanaka T."/>
            <person name="Ishii S."/>
            <person name="Yamamoto J."/>
            <person name="Saito K."/>
            <person name="Kawai Y."/>
            <person name="Isono Y."/>
            <person name="Nakamura Y."/>
            <person name="Nagahari K."/>
            <person name="Murakami K."/>
            <person name="Yasuda T."/>
            <person name="Iwayanagi T."/>
            <person name="Wagatsuma M."/>
            <person name="Shiratori A."/>
            <person name="Sudo H."/>
            <person name="Hosoiri T."/>
            <person name="Kaku Y."/>
            <person name="Kodaira H."/>
            <person name="Kondo H."/>
            <person name="Sugawara M."/>
            <person name="Takahashi M."/>
            <person name="Kanda K."/>
            <person name="Yokoi T."/>
            <person name="Furuya T."/>
            <person name="Kikkawa E."/>
            <person name="Omura Y."/>
            <person name="Abe K."/>
            <person name="Kamihara K."/>
            <person name="Katsuta N."/>
            <person name="Sato K."/>
            <person name="Tanikawa M."/>
            <person name="Yamazaki M."/>
            <person name="Ninomiya K."/>
            <person name="Ishibashi T."/>
            <person name="Yamashita H."/>
            <person name="Murakawa K."/>
            <person name="Fujimori K."/>
            <person name="Tanai H."/>
            <person name="Kimata M."/>
            <person name="Watanabe M."/>
            <person name="Hiraoka S."/>
            <person name="Chiba Y."/>
            <person name="Ishida S."/>
            <person name="Ono Y."/>
            <person name="Takiguchi S."/>
            <person name="Watanabe S."/>
            <person name="Yosida M."/>
            <person name="Hotuta T."/>
            <person name="Kusano J."/>
            <person name="Kanehori K."/>
            <person name="Takahashi-Fujii A."/>
            <person name="Hara H."/>
            <person name="Tanase T.-O."/>
            <person name="Nomura Y."/>
            <person name="Togiya S."/>
            <person name="Komai F."/>
            <person name="Hara R."/>
            <person name="Takeuchi K."/>
            <person name="Arita M."/>
            <person name="Imose N."/>
            <person name="Musashino K."/>
            <person name="Yuuki H."/>
            <person name="Oshima A."/>
            <person name="Sasaki N."/>
            <person name="Aotsuka S."/>
            <person name="Yoshikawa Y."/>
            <person name="Matsunawa H."/>
            <person name="Ichihara T."/>
            <person name="Shiohata N."/>
            <person name="Sano S."/>
            <person name="Moriya S."/>
            <person name="Momiyama H."/>
            <person name="Satoh N."/>
            <person name="Takami S."/>
            <person name="Terashima Y."/>
            <person name="Suzuki O."/>
            <person name="Nakagawa S."/>
            <person name="Senoh A."/>
            <person name="Mizoguchi H."/>
            <person name="Goto Y."/>
            <person name="Shimizu F."/>
            <person name="Wakebe H."/>
            <person name="Hishigaki H."/>
            <person name="Watanabe T."/>
            <person name="Sugiyama A."/>
            <person name="Takemoto M."/>
            <person name="Kawakami B."/>
            <person name="Yamazaki M."/>
            <person name="Watanabe K."/>
            <person name="Kumagai A."/>
            <person name="Itakura S."/>
            <person name="Fukuzumi Y."/>
            <person name="Fujimori Y."/>
            <person name="Komiyama M."/>
            <person name="Tashiro H."/>
            <person name="Tanigami A."/>
            <person name="Fujiwara T."/>
            <person name="Ono T."/>
            <person name="Yamada K."/>
            <person name="Fujii Y."/>
            <person name="Ozaki K."/>
            <person name="Hirao M."/>
            <person name="Ohmori Y."/>
            <person name="Kawabata A."/>
            <person name="Hikiji T."/>
            <person name="Kobatake N."/>
            <person name="Inagaki H."/>
            <person name="Ikema Y."/>
            <person name="Okamoto S."/>
            <person name="Okitani R."/>
            <person name="Kawakami T."/>
            <person name="Noguchi S."/>
            <person name="Itoh T."/>
            <person name="Shigeta K."/>
            <person name="Senba T."/>
            <person name="Matsumura K."/>
            <person name="Nakajima Y."/>
            <person name="Mizuno T."/>
            <person name="Morinaga M."/>
            <person name="Sasaki M."/>
            <person name="Togashi T."/>
            <person name="Oyama M."/>
            <person name="Hata H."/>
            <person name="Watanabe M."/>
            <person name="Komatsu T."/>
            <person name="Mizushima-Sugano J."/>
            <person name="Satoh T."/>
            <person name="Shirai Y."/>
            <person name="Takahashi Y."/>
            <person name="Nakagawa K."/>
            <person name="Okumura K."/>
            <person name="Nagase T."/>
            <person name="Nomura N."/>
            <person name="Kikuchi H."/>
            <person name="Masuho Y."/>
            <person name="Yamashita R."/>
            <person name="Nakai K."/>
            <person name="Yada T."/>
            <person name="Nakamura Y."/>
            <person name="Ohara O."/>
            <person name="Isogai T."/>
            <person name="Sugano S."/>
        </authorList>
    </citation>
    <scope>NUCLEOTIDE SEQUENCE [LARGE SCALE MRNA]</scope>
    <source>
        <tissue>Testis</tissue>
    </source>
</reference>
<reference key="2">
    <citation type="journal article" date="2004" name="Nature">
        <title>The DNA sequence and biology of human chromosome 19.</title>
        <authorList>
            <person name="Grimwood J."/>
            <person name="Gordon L.A."/>
            <person name="Olsen A.S."/>
            <person name="Terry A."/>
            <person name="Schmutz J."/>
            <person name="Lamerdin J.E."/>
            <person name="Hellsten U."/>
            <person name="Goodstein D."/>
            <person name="Couronne O."/>
            <person name="Tran-Gyamfi M."/>
            <person name="Aerts A."/>
            <person name="Altherr M."/>
            <person name="Ashworth L."/>
            <person name="Bajorek E."/>
            <person name="Black S."/>
            <person name="Branscomb E."/>
            <person name="Caenepeel S."/>
            <person name="Carrano A.V."/>
            <person name="Caoile C."/>
            <person name="Chan Y.M."/>
            <person name="Christensen M."/>
            <person name="Cleland C.A."/>
            <person name="Copeland A."/>
            <person name="Dalin E."/>
            <person name="Dehal P."/>
            <person name="Denys M."/>
            <person name="Detter J.C."/>
            <person name="Escobar J."/>
            <person name="Flowers D."/>
            <person name="Fotopulos D."/>
            <person name="Garcia C."/>
            <person name="Georgescu A.M."/>
            <person name="Glavina T."/>
            <person name="Gomez M."/>
            <person name="Gonzales E."/>
            <person name="Groza M."/>
            <person name="Hammon N."/>
            <person name="Hawkins T."/>
            <person name="Haydu L."/>
            <person name="Ho I."/>
            <person name="Huang W."/>
            <person name="Israni S."/>
            <person name="Jett J."/>
            <person name="Kadner K."/>
            <person name="Kimball H."/>
            <person name="Kobayashi A."/>
            <person name="Larionov V."/>
            <person name="Leem S.-H."/>
            <person name="Lopez F."/>
            <person name="Lou Y."/>
            <person name="Lowry S."/>
            <person name="Malfatti S."/>
            <person name="Martinez D."/>
            <person name="McCready P.M."/>
            <person name="Medina C."/>
            <person name="Morgan J."/>
            <person name="Nelson K."/>
            <person name="Nolan M."/>
            <person name="Ovcharenko I."/>
            <person name="Pitluck S."/>
            <person name="Pollard M."/>
            <person name="Popkie A.P."/>
            <person name="Predki P."/>
            <person name="Quan G."/>
            <person name="Ramirez L."/>
            <person name="Rash S."/>
            <person name="Retterer J."/>
            <person name="Rodriguez A."/>
            <person name="Rogers S."/>
            <person name="Salamov A."/>
            <person name="Salazar A."/>
            <person name="She X."/>
            <person name="Smith D."/>
            <person name="Slezak T."/>
            <person name="Solovyev V."/>
            <person name="Thayer N."/>
            <person name="Tice H."/>
            <person name="Tsai M."/>
            <person name="Ustaszewska A."/>
            <person name="Vo N."/>
            <person name="Wagner M."/>
            <person name="Wheeler J."/>
            <person name="Wu K."/>
            <person name="Xie G."/>
            <person name="Yang J."/>
            <person name="Dubchak I."/>
            <person name="Furey T.S."/>
            <person name="DeJong P."/>
            <person name="Dickson M."/>
            <person name="Gordon D."/>
            <person name="Eichler E.E."/>
            <person name="Pennacchio L.A."/>
            <person name="Richardson P."/>
            <person name="Stubbs L."/>
            <person name="Rokhsar D.S."/>
            <person name="Myers R.M."/>
            <person name="Rubin E.M."/>
            <person name="Lucas S.M."/>
        </authorList>
    </citation>
    <scope>NUCLEOTIDE SEQUENCE [LARGE SCALE GENOMIC DNA]</scope>
</reference>
<reference key="3">
    <citation type="submission" date="2004-08" db="EMBL/GenBank/DDBJ databases">
        <authorList>
            <person name="Ebert L."/>
            <person name="Heil O."/>
            <person name="Hennig S."/>
            <person name="Korn B."/>
            <person name="Neubert P."/>
            <person name="Partsch E."/>
            <person name="Peters M."/>
            <person name="Radelof U."/>
            <person name="Schneider D."/>
        </authorList>
    </citation>
    <scope>NUCLEOTIDE SEQUENCE [LARGE SCALE MRNA] OF 1-161</scope>
    <source>
        <tissue>Lymphoma</tissue>
    </source>
</reference>
<reference key="4">
    <citation type="journal article" date="2004" name="Genome Res.">
        <title>The status, quality, and expansion of the NIH full-length cDNA project: the Mammalian Gene Collection (MGC).</title>
        <authorList>
            <consortium name="The MGC Project Team"/>
        </authorList>
    </citation>
    <scope>NUCLEOTIDE SEQUENCE [LARGE SCALE MRNA] OF 7-217</scope>
    <source>
        <tissue>Lymph</tissue>
    </source>
</reference>
<comment type="function">
    <text evidence="1">Major component of the transverse central element of synaptonemal complexes (SCS), formed between homologous chromosomes during meiotic prophase. Requires SYCP1 in order to be incorporated into the central element. May have a role in the synaptonemal complex assembly, stabilization and recombination (By similarity).</text>
</comment>
<comment type="subunit">
    <text evidence="1">Homodimer. Found in a complex with SYCP1 and SYCE1. Interacts with SYCP1, SYCE1 and SYCE3 (By similarity). Interacts with TEX12 (By similarity).</text>
</comment>
<comment type="interaction">
    <interactant intactId="EBI-11958386">
        <id>Q6PIF2</id>
    </interactant>
    <interactant intactId="EBI-10181422">
        <id>A0A1B0GWI1</id>
        <label>CCDC196</label>
    </interactant>
    <organismsDiffer>false</organismsDiffer>
    <experiments>8</experiments>
</comment>
<comment type="interaction">
    <interactant intactId="EBI-11958386">
        <id>Q6PIF2</id>
    </interactant>
    <interactant intactId="EBI-295634">
        <id>Q16543</id>
        <label>CDC37</label>
    </interactant>
    <organismsDiffer>false</organismsDiffer>
    <experiments>3</experiments>
</comment>
<comment type="interaction">
    <interactant intactId="EBI-11958386">
        <id>Q6PIF2</id>
    </interactant>
    <interactant intactId="EBI-9304251">
        <id>Q05329</id>
        <label>GAD2</label>
    </interactant>
    <organismsDiffer>false</organismsDiffer>
    <experiments>3</experiments>
</comment>
<comment type="interaction">
    <interactant intactId="EBI-11958386">
        <id>Q6PIF2</id>
    </interactant>
    <interactant intactId="EBI-746815">
        <id>Q86YM7</id>
        <label>HOMER1</label>
    </interactant>
    <organismsDiffer>false</organismsDiffer>
    <experiments>3</experiments>
</comment>
<comment type="interaction">
    <interactant intactId="EBI-11958386">
        <id>Q6PIF2</id>
    </interactant>
    <interactant intactId="EBI-9091197">
        <id>Q8IY31-3</id>
        <label>IFT20</label>
    </interactant>
    <organismsDiffer>false</organismsDiffer>
    <experiments>3</experiments>
</comment>
<comment type="interaction">
    <interactant intactId="EBI-11958386">
        <id>Q6PIF2</id>
    </interactant>
    <interactant intactId="EBI-14069005">
        <id>Q9BVG8-5</id>
        <label>KIFC3</label>
    </interactant>
    <organismsDiffer>false</organismsDiffer>
    <experiments>3</experiments>
</comment>
<comment type="interaction">
    <interactant intactId="EBI-11958386">
        <id>Q6PIF2</id>
    </interactant>
    <interactant intactId="EBI-394704">
        <id>Q9P086</id>
        <label>MED11</label>
    </interactant>
    <organismsDiffer>false</organismsDiffer>
    <experiments>3</experiments>
</comment>
<comment type="interaction">
    <interactant intactId="EBI-11958386">
        <id>Q6PIF2</id>
    </interactant>
    <interactant intactId="EBI-394607">
        <id>Q9NPJ6</id>
        <label>MED4</label>
    </interactant>
    <organismsDiffer>false</organismsDiffer>
    <experiments>4</experiments>
</comment>
<comment type="interaction">
    <interactant intactId="EBI-11958386">
        <id>Q6PIF2</id>
    </interactant>
    <interactant intactId="EBI-713627">
        <id>Q96NT1</id>
        <label>NAP1L5</label>
    </interactant>
    <organismsDiffer>false</organismsDiffer>
    <experiments>5</experiments>
</comment>
<comment type="interaction">
    <interactant intactId="EBI-11958386">
        <id>Q6PIF2</id>
    </interactant>
    <interactant intactId="EBI-12090309">
        <id>Q9BXU0</id>
        <label>TEX12</label>
    </interactant>
    <organismsDiffer>false</organismsDiffer>
    <experiments>5</experiments>
</comment>
<comment type="interaction">
    <interactant intactId="EBI-11958386">
        <id>Q6PIF2</id>
    </interactant>
    <interactant intactId="EBI-11525489">
        <id>Q86WT6-2</id>
        <label>TRIM69</label>
    </interactant>
    <organismsDiffer>false</organismsDiffer>
    <experiments>3</experiments>
</comment>
<comment type="interaction">
    <interactant intactId="EBI-11958386">
        <id>Q6PIF2</id>
    </interactant>
    <interactant intactId="EBI-11059915">
        <id>Q8N7C3</id>
        <label>TRIML2</label>
    </interactant>
    <organismsDiffer>false</organismsDiffer>
    <experiments>5</experiments>
</comment>
<comment type="interaction">
    <interactant intactId="EBI-11958386">
        <id>Q6PIF2</id>
    </interactant>
    <interactant intactId="EBI-21353855">
        <id>Q99598</id>
        <label>TSNAX</label>
    </interactant>
    <organismsDiffer>false</organismsDiffer>
    <experiments>3</experiments>
</comment>
<comment type="subcellular location">
    <subcellularLocation>
        <location evidence="1">Nucleus</location>
    </subcellularLocation>
    <subcellularLocation>
        <location evidence="1">Chromosome</location>
    </subcellularLocation>
    <text evidence="1">Associates with chromatin. In prophase I stage of meiosis, localizes in the transverse central elements of the central region between lateral elements of the synaptonemal complexes. Found only where the chromosome cores are synapsed. Colocalizes with SYCE1 in the central elements (By similarity).</text>
</comment>
<comment type="similarity">
    <text evidence="4">Belongs to the SYCE family.</text>
</comment>
<organism>
    <name type="scientific">Homo sapiens</name>
    <name type="common">Human</name>
    <dbReference type="NCBI Taxonomy" id="9606"/>
    <lineage>
        <taxon>Eukaryota</taxon>
        <taxon>Metazoa</taxon>
        <taxon>Chordata</taxon>
        <taxon>Craniata</taxon>
        <taxon>Vertebrata</taxon>
        <taxon>Euteleostomi</taxon>
        <taxon>Mammalia</taxon>
        <taxon>Eutheria</taxon>
        <taxon>Euarchontoglires</taxon>
        <taxon>Primates</taxon>
        <taxon>Haplorrhini</taxon>
        <taxon>Catarrhini</taxon>
        <taxon>Hominidae</taxon>
        <taxon>Homo</taxon>
    </lineage>
</organism>
<evidence type="ECO:0000250" key="1">
    <source>
        <dbReference type="UniProtKB" id="Q505B8"/>
    </source>
</evidence>
<evidence type="ECO:0000255" key="2"/>
<evidence type="ECO:0000256" key="3">
    <source>
        <dbReference type="SAM" id="MobiDB-lite"/>
    </source>
</evidence>
<evidence type="ECO:0000305" key="4"/>
<evidence type="ECO:0007829" key="5">
    <source>
        <dbReference type="PDB" id="6R17"/>
    </source>
</evidence>
<protein>
    <recommendedName>
        <fullName>Synaptonemal complex central element protein 2</fullName>
    </recommendedName>
    <alternativeName>
        <fullName evidence="1">Central element synaptonemal complex protein 1</fullName>
    </alternativeName>
</protein>
<feature type="chain" id="PRO_0000262562" description="Synaptonemal complex central element protein 2">
    <location>
        <begin position="1"/>
        <end position="218"/>
    </location>
</feature>
<feature type="region of interest" description="Disordered" evidence="3">
    <location>
        <begin position="1"/>
        <end position="42"/>
    </location>
</feature>
<feature type="region of interest" description="Disordered" evidence="3">
    <location>
        <begin position="171"/>
        <end position="218"/>
    </location>
</feature>
<feature type="coiled-coil region" evidence="2">
    <location>
        <begin position="61"/>
        <end position="87"/>
    </location>
</feature>
<feature type="compositionally biased region" description="Basic and acidic residues" evidence="3">
    <location>
        <begin position="1"/>
        <end position="32"/>
    </location>
</feature>
<feature type="compositionally biased region" description="Polar residues" evidence="3">
    <location>
        <begin position="198"/>
        <end position="211"/>
    </location>
</feature>
<feature type="helix" evidence="5">
    <location>
        <begin position="59"/>
        <end position="149"/>
    </location>
</feature>
<proteinExistence type="evidence at protein level"/>
<gene>
    <name type="primary">SYCE2</name>
    <name evidence="1" type="synonym">CESC1</name>
</gene>
<sequence>MERQGVDVPHVKCKDQEPQPLGESKEHPRWEENCEEEAGGGPASASCQLTVLEGKSGLYFSSLDSSIDILQKRAQELIENINKSRQKDHALMTNFRNSLKTKVSDLTEKLEERIYQIYNDHNKIIQEKLQEFTQKMAKISHLETELKQVCHSVETVYKDLCLQPEQSLRLRWGPDHSRGKSPPRPGNSQPPDVFVSSVAETTSQATASEVQTNRDGEC</sequence>
<dbReference type="EMBL" id="AK302373">
    <property type="protein sequence ID" value="BAG63695.1"/>
    <property type="molecule type" value="mRNA"/>
</dbReference>
<dbReference type="EMBL" id="AD000092">
    <property type="status" value="NOT_ANNOTATED_CDS"/>
    <property type="molecule type" value="Genomic_DNA"/>
</dbReference>
<dbReference type="EMBL" id="AC092069">
    <property type="status" value="NOT_ANNOTATED_CDS"/>
    <property type="molecule type" value="Genomic_DNA"/>
</dbReference>
<dbReference type="EMBL" id="CR746484">
    <property type="status" value="NOT_ANNOTATED_CDS"/>
    <property type="molecule type" value="mRNA"/>
</dbReference>
<dbReference type="EMBL" id="BC035819">
    <property type="protein sequence ID" value="AAH35819.1"/>
    <property type="molecule type" value="mRNA"/>
</dbReference>
<dbReference type="CCDS" id="CCDS42509.1"/>
<dbReference type="RefSeq" id="NP_001099048.1">
    <property type="nucleotide sequence ID" value="NM_001105578.2"/>
</dbReference>
<dbReference type="PDB" id="6R17">
    <property type="method" value="X-ray"/>
    <property type="resolution" value="2.42 A"/>
    <property type="chains" value="A/B=57-165"/>
</dbReference>
<dbReference type="PDB" id="6YQF">
    <property type="method" value="X-ray"/>
    <property type="resolution" value="3.33 A"/>
    <property type="chains" value="A/B=57-165"/>
</dbReference>
<dbReference type="PDBsum" id="6R17"/>
<dbReference type="PDBsum" id="6YQF"/>
<dbReference type="SMR" id="Q6PIF2"/>
<dbReference type="BioGRID" id="129139">
    <property type="interactions" value="25"/>
</dbReference>
<dbReference type="ComplexPortal" id="CPX-2461">
    <property type="entry name" value="Synaptonemal complex"/>
</dbReference>
<dbReference type="FunCoup" id="Q6PIF2">
    <property type="interactions" value="652"/>
</dbReference>
<dbReference type="IntAct" id="Q6PIF2">
    <property type="interactions" value="18"/>
</dbReference>
<dbReference type="STRING" id="9606.ENSP00000293695"/>
<dbReference type="iPTMnet" id="Q6PIF2"/>
<dbReference type="PhosphoSitePlus" id="Q6PIF2"/>
<dbReference type="BioMuta" id="SYCE2"/>
<dbReference type="DMDM" id="118573898"/>
<dbReference type="jPOST" id="Q6PIF2"/>
<dbReference type="MassIVE" id="Q6PIF2"/>
<dbReference type="PaxDb" id="9606-ENSP00000293695"/>
<dbReference type="PeptideAtlas" id="Q6PIF2"/>
<dbReference type="ProteomicsDB" id="67154"/>
<dbReference type="Antibodypedia" id="49860">
    <property type="antibodies" value="74 antibodies from 14 providers"/>
</dbReference>
<dbReference type="DNASU" id="256126"/>
<dbReference type="Ensembl" id="ENST00000293695.8">
    <property type="protein sequence ID" value="ENSP00000293695.6"/>
    <property type="gene ID" value="ENSG00000161860.8"/>
</dbReference>
<dbReference type="GeneID" id="256126"/>
<dbReference type="KEGG" id="hsa:256126"/>
<dbReference type="MANE-Select" id="ENST00000293695.8">
    <property type="protein sequence ID" value="ENSP00000293695.6"/>
    <property type="RefSeq nucleotide sequence ID" value="NM_001105578.2"/>
    <property type="RefSeq protein sequence ID" value="NP_001099048.1"/>
</dbReference>
<dbReference type="UCSC" id="uc002mvr.3">
    <property type="organism name" value="human"/>
</dbReference>
<dbReference type="AGR" id="HGNC:27411"/>
<dbReference type="CTD" id="256126"/>
<dbReference type="DisGeNET" id="256126"/>
<dbReference type="GeneCards" id="SYCE2"/>
<dbReference type="HGNC" id="HGNC:27411">
    <property type="gene designation" value="SYCE2"/>
</dbReference>
<dbReference type="HPA" id="ENSG00000161860">
    <property type="expression patterns" value="Tissue enriched (testis)"/>
</dbReference>
<dbReference type="MalaCards" id="SYCE2"/>
<dbReference type="MIM" id="611487">
    <property type="type" value="gene"/>
</dbReference>
<dbReference type="neXtProt" id="NX_Q6PIF2"/>
<dbReference type="OpenTargets" id="ENSG00000161860"/>
<dbReference type="PharmGKB" id="PA142670849"/>
<dbReference type="VEuPathDB" id="HostDB:ENSG00000161860"/>
<dbReference type="eggNOG" id="ENOG502S7EK">
    <property type="taxonomic scope" value="Eukaryota"/>
</dbReference>
<dbReference type="GeneTree" id="ENSGT00390000004872"/>
<dbReference type="HOGENOM" id="CLU_117939_0_0_1"/>
<dbReference type="InParanoid" id="Q6PIF2"/>
<dbReference type="OMA" id="RQGVDMP"/>
<dbReference type="OrthoDB" id="6142414at2759"/>
<dbReference type="PAN-GO" id="Q6PIF2">
    <property type="GO annotations" value="1 GO annotation based on evolutionary models"/>
</dbReference>
<dbReference type="PhylomeDB" id="Q6PIF2"/>
<dbReference type="TreeFam" id="TF333776"/>
<dbReference type="PathwayCommons" id="Q6PIF2"/>
<dbReference type="Reactome" id="R-HSA-1221632">
    <property type="pathway name" value="Meiotic synapsis"/>
</dbReference>
<dbReference type="SignaLink" id="Q6PIF2"/>
<dbReference type="SIGNOR" id="Q6PIF2"/>
<dbReference type="BioGRID-ORCS" id="256126">
    <property type="hits" value="22 hits in 1158 CRISPR screens"/>
</dbReference>
<dbReference type="ChiTaRS" id="SYCE2">
    <property type="organism name" value="human"/>
</dbReference>
<dbReference type="GenomeRNAi" id="256126"/>
<dbReference type="Pharos" id="Q6PIF2">
    <property type="development level" value="Tbio"/>
</dbReference>
<dbReference type="PRO" id="PR:Q6PIF2"/>
<dbReference type="Proteomes" id="UP000005640">
    <property type="component" value="Chromosome 19"/>
</dbReference>
<dbReference type="RNAct" id="Q6PIF2">
    <property type="molecule type" value="protein"/>
</dbReference>
<dbReference type="Bgee" id="ENSG00000161860">
    <property type="expression patterns" value="Expressed in right testis and 97 other cell types or tissues"/>
</dbReference>
<dbReference type="ExpressionAtlas" id="Q6PIF2">
    <property type="expression patterns" value="baseline and differential"/>
</dbReference>
<dbReference type="GO" id="GO:0000801">
    <property type="term" value="C:central element"/>
    <property type="evidence" value="ECO:0000250"/>
    <property type="project" value="HGNC"/>
</dbReference>
<dbReference type="GO" id="GO:0005694">
    <property type="term" value="C:chromosome"/>
    <property type="evidence" value="ECO:0000250"/>
    <property type="project" value="UniProtKB"/>
</dbReference>
<dbReference type="GO" id="GO:0005654">
    <property type="term" value="C:nucleoplasm"/>
    <property type="evidence" value="ECO:0000314"/>
    <property type="project" value="HPA"/>
</dbReference>
<dbReference type="GO" id="GO:0051301">
    <property type="term" value="P:cell division"/>
    <property type="evidence" value="ECO:0007669"/>
    <property type="project" value="UniProtKB-KW"/>
</dbReference>
<dbReference type="GO" id="GO:0007130">
    <property type="term" value="P:synaptonemal complex assembly"/>
    <property type="evidence" value="ECO:0000303"/>
    <property type="project" value="BHF-UCL"/>
</dbReference>
<dbReference type="InterPro" id="IPR034609">
    <property type="entry name" value="Syce2"/>
</dbReference>
<dbReference type="PANTHER" id="PTHR28398">
    <property type="entry name" value="SYNAPTONEMAL COMPLEX CENTRAL ELEMENT PROTEIN 2"/>
    <property type="match status" value="1"/>
</dbReference>
<dbReference type="PANTHER" id="PTHR28398:SF1">
    <property type="entry name" value="SYNAPTONEMAL COMPLEX CENTRAL ELEMENT PROTEIN 2"/>
    <property type="match status" value="1"/>
</dbReference>